<organism>
    <name type="scientific">Listeria welshimeri serovar 6b (strain ATCC 35897 / DSM 20650 / CCUG 15529 / CIP 8149 / NCTC 11857 / SLCC 5334 / V8)</name>
    <dbReference type="NCBI Taxonomy" id="386043"/>
    <lineage>
        <taxon>Bacteria</taxon>
        <taxon>Bacillati</taxon>
        <taxon>Bacillota</taxon>
        <taxon>Bacilli</taxon>
        <taxon>Bacillales</taxon>
        <taxon>Listeriaceae</taxon>
        <taxon>Listeria</taxon>
    </lineage>
</organism>
<dbReference type="EC" id="2.1.3.2" evidence="1"/>
<dbReference type="EMBL" id="AM263198">
    <property type="protein sequence ID" value="CAK21275.1"/>
    <property type="molecule type" value="Genomic_DNA"/>
</dbReference>
<dbReference type="RefSeq" id="WP_011702627.1">
    <property type="nucleotide sequence ID" value="NC_008555.1"/>
</dbReference>
<dbReference type="SMR" id="A0AJU3"/>
<dbReference type="STRING" id="386043.lwe1857"/>
<dbReference type="GeneID" id="61189758"/>
<dbReference type="KEGG" id="lwe:lwe1857"/>
<dbReference type="eggNOG" id="COG0540">
    <property type="taxonomic scope" value="Bacteria"/>
</dbReference>
<dbReference type="HOGENOM" id="CLU_043846_2_1_9"/>
<dbReference type="OrthoDB" id="9774690at2"/>
<dbReference type="UniPathway" id="UPA00070">
    <property type="reaction ID" value="UER00116"/>
</dbReference>
<dbReference type="Proteomes" id="UP000000779">
    <property type="component" value="Chromosome"/>
</dbReference>
<dbReference type="GO" id="GO:0005829">
    <property type="term" value="C:cytosol"/>
    <property type="evidence" value="ECO:0007669"/>
    <property type="project" value="TreeGrafter"/>
</dbReference>
<dbReference type="GO" id="GO:0016597">
    <property type="term" value="F:amino acid binding"/>
    <property type="evidence" value="ECO:0007669"/>
    <property type="project" value="InterPro"/>
</dbReference>
<dbReference type="GO" id="GO:0004070">
    <property type="term" value="F:aspartate carbamoyltransferase activity"/>
    <property type="evidence" value="ECO:0007669"/>
    <property type="project" value="UniProtKB-UniRule"/>
</dbReference>
<dbReference type="GO" id="GO:0006207">
    <property type="term" value="P:'de novo' pyrimidine nucleobase biosynthetic process"/>
    <property type="evidence" value="ECO:0007669"/>
    <property type="project" value="InterPro"/>
</dbReference>
<dbReference type="GO" id="GO:0044205">
    <property type="term" value="P:'de novo' UMP biosynthetic process"/>
    <property type="evidence" value="ECO:0007669"/>
    <property type="project" value="UniProtKB-UniRule"/>
</dbReference>
<dbReference type="GO" id="GO:0006520">
    <property type="term" value="P:amino acid metabolic process"/>
    <property type="evidence" value="ECO:0007669"/>
    <property type="project" value="InterPro"/>
</dbReference>
<dbReference type="FunFam" id="3.40.50.1370:FF:000011">
    <property type="entry name" value="Aspartate carbamoyltransferase"/>
    <property type="match status" value="1"/>
</dbReference>
<dbReference type="Gene3D" id="3.40.50.1370">
    <property type="entry name" value="Aspartate/ornithine carbamoyltransferase"/>
    <property type="match status" value="2"/>
</dbReference>
<dbReference type="HAMAP" id="MF_00001">
    <property type="entry name" value="Asp_carb_tr"/>
    <property type="match status" value="1"/>
</dbReference>
<dbReference type="InterPro" id="IPR006132">
    <property type="entry name" value="Asp/Orn_carbamoyltranf_P-bd"/>
</dbReference>
<dbReference type="InterPro" id="IPR006130">
    <property type="entry name" value="Asp/Orn_carbamoylTrfase"/>
</dbReference>
<dbReference type="InterPro" id="IPR036901">
    <property type="entry name" value="Asp/Orn_carbamoylTrfase_sf"/>
</dbReference>
<dbReference type="InterPro" id="IPR002082">
    <property type="entry name" value="Asp_carbamoyltransf"/>
</dbReference>
<dbReference type="InterPro" id="IPR006131">
    <property type="entry name" value="Asp_carbamoyltransf_Asp/Orn-bd"/>
</dbReference>
<dbReference type="NCBIfam" id="TIGR00670">
    <property type="entry name" value="asp_carb_tr"/>
    <property type="match status" value="1"/>
</dbReference>
<dbReference type="NCBIfam" id="NF002032">
    <property type="entry name" value="PRK00856.1"/>
    <property type="match status" value="1"/>
</dbReference>
<dbReference type="PANTHER" id="PTHR45753:SF6">
    <property type="entry name" value="ASPARTATE CARBAMOYLTRANSFERASE"/>
    <property type="match status" value="1"/>
</dbReference>
<dbReference type="PANTHER" id="PTHR45753">
    <property type="entry name" value="ORNITHINE CARBAMOYLTRANSFERASE, MITOCHONDRIAL"/>
    <property type="match status" value="1"/>
</dbReference>
<dbReference type="Pfam" id="PF00185">
    <property type="entry name" value="OTCace"/>
    <property type="match status" value="1"/>
</dbReference>
<dbReference type="Pfam" id="PF02729">
    <property type="entry name" value="OTCace_N"/>
    <property type="match status" value="1"/>
</dbReference>
<dbReference type="PRINTS" id="PR00100">
    <property type="entry name" value="AOTCASE"/>
</dbReference>
<dbReference type="PRINTS" id="PR00101">
    <property type="entry name" value="ATCASE"/>
</dbReference>
<dbReference type="SUPFAM" id="SSF53671">
    <property type="entry name" value="Aspartate/ornithine carbamoyltransferase"/>
    <property type="match status" value="1"/>
</dbReference>
<dbReference type="PROSITE" id="PS00097">
    <property type="entry name" value="CARBAMOYLTRANSFERASE"/>
    <property type="match status" value="1"/>
</dbReference>
<keyword id="KW-0665">Pyrimidine biosynthesis</keyword>
<keyword id="KW-0808">Transferase</keyword>
<evidence type="ECO:0000255" key="1">
    <source>
        <dbReference type="HAMAP-Rule" id="MF_00001"/>
    </source>
</evidence>
<proteinExistence type="inferred from homology"/>
<name>PYRB_LISW6</name>
<feature type="chain" id="PRO_0000301586" description="Aspartate carbamoyltransferase catalytic subunit">
    <location>
        <begin position="1"/>
        <end position="303"/>
    </location>
</feature>
<feature type="binding site" evidence="1">
    <location>
        <position position="49"/>
    </location>
    <ligand>
        <name>carbamoyl phosphate</name>
        <dbReference type="ChEBI" id="CHEBI:58228"/>
    </ligand>
</feature>
<feature type="binding site" evidence="1">
    <location>
        <position position="50"/>
    </location>
    <ligand>
        <name>carbamoyl phosphate</name>
        <dbReference type="ChEBI" id="CHEBI:58228"/>
    </ligand>
</feature>
<feature type="binding site" evidence="1">
    <location>
        <position position="77"/>
    </location>
    <ligand>
        <name>L-aspartate</name>
        <dbReference type="ChEBI" id="CHEBI:29991"/>
    </ligand>
</feature>
<feature type="binding site" evidence="1">
    <location>
        <position position="99"/>
    </location>
    <ligand>
        <name>carbamoyl phosphate</name>
        <dbReference type="ChEBI" id="CHEBI:58228"/>
    </ligand>
</feature>
<feature type="binding site" evidence="1">
    <location>
        <position position="126"/>
    </location>
    <ligand>
        <name>carbamoyl phosphate</name>
        <dbReference type="ChEBI" id="CHEBI:58228"/>
    </ligand>
</feature>
<feature type="binding site" evidence="1">
    <location>
        <position position="129"/>
    </location>
    <ligand>
        <name>carbamoyl phosphate</name>
        <dbReference type="ChEBI" id="CHEBI:58228"/>
    </ligand>
</feature>
<feature type="binding site" evidence="1">
    <location>
        <position position="159"/>
    </location>
    <ligand>
        <name>L-aspartate</name>
        <dbReference type="ChEBI" id="CHEBI:29991"/>
    </ligand>
</feature>
<feature type="binding site" evidence="1">
    <location>
        <position position="211"/>
    </location>
    <ligand>
        <name>L-aspartate</name>
        <dbReference type="ChEBI" id="CHEBI:29991"/>
    </ligand>
</feature>
<feature type="binding site" evidence="1">
    <location>
        <position position="252"/>
    </location>
    <ligand>
        <name>carbamoyl phosphate</name>
        <dbReference type="ChEBI" id="CHEBI:58228"/>
    </ligand>
</feature>
<feature type="binding site" evidence="1">
    <location>
        <position position="253"/>
    </location>
    <ligand>
        <name>carbamoyl phosphate</name>
        <dbReference type="ChEBI" id="CHEBI:58228"/>
    </ligand>
</feature>
<protein>
    <recommendedName>
        <fullName evidence="1">Aspartate carbamoyltransferase catalytic subunit</fullName>
        <ecNumber evidence="1">2.1.3.2</ecNumber>
    </recommendedName>
    <alternativeName>
        <fullName evidence="1">Aspartate transcarbamylase</fullName>
        <shortName evidence="1">ATCase</shortName>
    </alternativeName>
</protein>
<sequence>MKNLLSMEALTVHEIEHLLEQAAQFKHGKKATFKEQTFAVNMFFEPSTRTHTSFEVAEKKLGVEVISFDASSSSMTKGETLYDTLLTMQAVGVNVAVIRHSDENYYAGLENLDIAIVNGGDGCGEHPSQSLLDLFTIKEQFGTFQGLKIAIVGDIRHSRVANSNMKVLKRLGAELFFSGPREWFDDSYLAYGTYLSIDEMVEKVDVMMLLRVQHERHSGTERFTKASYHEKFGLTEERAMKLKEDAIIMHPSPVNRDVEIADSLVESEKSRIVTQMTNGVFIRMAILEVILKEKSRRAKVCTY</sequence>
<gene>
    <name evidence="1" type="primary">pyrB</name>
    <name type="ordered locus">lwe1857</name>
</gene>
<accession>A0AJU3</accession>
<reference key="1">
    <citation type="journal article" date="2006" name="J. Bacteriol.">
        <title>Whole-genome sequence of Listeria welshimeri reveals common steps in genome reduction with Listeria innocua as compared to Listeria monocytogenes.</title>
        <authorList>
            <person name="Hain T."/>
            <person name="Steinweg C."/>
            <person name="Kuenne C.T."/>
            <person name="Billion A."/>
            <person name="Ghai R."/>
            <person name="Chatterjee S.S."/>
            <person name="Domann E."/>
            <person name="Kaerst U."/>
            <person name="Goesmann A."/>
            <person name="Bekel T."/>
            <person name="Bartels D."/>
            <person name="Kaiser O."/>
            <person name="Meyer F."/>
            <person name="Puehler A."/>
            <person name="Weisshaar B."/>
            <person name="Wehland J."/>
            <person name="Liang C."/>
            <person name="Dandekar T."/>
            <person name="Lampidis R."/>
            <person name="Kreft J."/>
            <person name="Goebel W."/>
            <person name="Chakraborty T."/>
        </authorList>
    </citation>
    <scope>NUCLEOTIDE SEQUENCE [LARGE SCALE GENOMIC DNA]</scope>
    <source>
        <strain>ATCC 35897 / DSM 20650 / CCUG 15529 / CIP 8149 / NCTC 11857 / SLCC 5334 / V8</strain>
    </source>
</reference>
<comment type="function">
    <text evidence="1">Catalyzes the condensation of carbamoyl phosphate and aspartate to form carbamoyl aspartate and inorganic phosphate, the committed step in the de novo pyrimidine nucleotide biosynthesis pathway.</text>
</comment>
<comment type="catalytic activity">
    <reaction evidence="1">
        <text>carbamoyl phosphate + L-aspartate = N-carbamoyl-L-aspartate + phosphate + H(+)</text>
        <dbReference type="Rhea" id="RHEA:20013"/>
        <dbReference type="ChEBI" id="CHEBI:15378"/>
        <dbReference type="ChEBI" id="CHEBI:29991"/>
        <dbReference type="ChEBI" id="CHEBI:32814"/>
        <dbReference type="ChEBI" id="CHEBI:43474"/>
        <dbReference type="ChEBI" id="CHEBI:58228"/>
        <dbReference type="EC" id="2.1.3.2"/>
    </reaction>
</comment>
<comment type="pathway">
    <text evidence="1">Pyrimidine metabolism; UMP biosynthesis via de novo pathway; (S)-dihydroorotate from bicarbonate: step 2/3.</text>
</comment>
<comment type="subunit">
    <text evidence="1">Heterododecamer (2C3:3R2) of six catalytic PyrB chains organized as two trimers (C3), and six regulatory PyrI chains organized as three dimers (R2).</text>
</comment>
<comment type="similarity">
    <text evidence="1">Belongs to the aspartate/ornithine carbamoyltransferase superfamily. ATCase family.</text>
</comment>